<evidence type="ECO:0000303" key="1">
    <source>
    </source>
</evidence>
<evidence type="ECO:0000305" key="2"/>
<evidence type="ECO:0000305" key="3">
    <source>
    </source>
</evidence>
<evidence type="ECO:0000312" key="4">
    <source>
        <dbReference type="EMBL" id="BAB58746.1"/>
    </source>
</evidence>
<evidence type="ECO:0007744" key="5">
    <source>
        <dbReference type="PDB" id="3D1C"/>
    </source>
</evidence>
<comment type="function">
    <text evidence="2">FAD-binding protein that may have monooxygenase activity using NADPH and/or NADH as an electron donor.</text>
</comment>
<comment type="cofactor">
    <cofactor evidence="2 5">
        <name>FAD</name>
        <dbReference type="ChEBI" id="CHEBI:57692"/>
    </cofactor>
</comment>
<comment type="caution">
    <text evidence="3">The crystal structure article has been retracted because submission was made without agreement from the last author. The protein was predicted in that paper to be a Baeyer-Villiger monooxygenase, but such activity was never experimentally shown. However, the protein binds to FAD in the crystal structure, and is probably an oxidoreductase.</text>
</comment>
<sequence>MQHHKVAIIGAGAAGIGMAITLKDFGITDVIILEKGTVGHSFKHWPKSTRTITPSFTSNGFGMPDMNAISMDTSPAFTFNEEHISGETYAEYLQVVANHYELNIFENTVVTNISADDAYYTIATTTETYHADYIFVATGDYNFPKKPFKYGIHYSEIEDFDNFNKGQYVVIGGNESGFDAAYQLAKNGSDIALYTSTTGLNDPDADPSVRLSPYTRQRLGNVIKQGARIEMNVHYTVKDIDFNNGQYHISFDSGQSVHTPHEPILATGFDATKNPIVQQLFVTTNQDIKLTTHDESTRYPNIFMIGATVENDNAKLCYIYKFRARFAVLAHLLTQREGLPAKQEVIENYQKNQMYLDDYSCCEVSCTC</sequence>
<name>FMO_STAAM</name>
<proteinExistence type="evidence at protein level"/>
<accession>Q99R54</accession>
<organism>
    <name type="scientific">Staphylococcus aureus (strain Mu50 / ATCC 700699)</name>
    <dbReference type="NCBI Taxonomy" id="158878"/>
    <lineage>
        <taxon>Bacteria</taxon>
        <taxon>Bacillati</taxon>
        <taxon>Bacillota</taxon>
        <taxon>Bacilli</taxon>
        <taxon>Bacillales</taxon>
        <taxon>Staphylococcaceae</taxon>
        <taxon>Staphylococcus</taxon>
    </lineage>
</organism>
<protein>
    <recommendedName>
        <fullName evidence="2">Putative flavoprotein monooxygenase</fullName>
        <ecNumber evidence="2">1.-.-.-</ecNumber>
    </recommendedName>
    <alternativeName>
        <fullName evidence="1">Baeyer-Villiger flavin-containing monooxygenase</fullName>
        <shortName evidence="1">BVFMO</shortName>
    </alternativeName>
    <alternativeName>
        <fullName evidence="1">Baeyer-Villiger monooxygenase</fullName>
        <shortName evidence="1">BVMO</shortName>
    </alternativeName>
    <alternativeName>
        <fullName evidence="1">Flavin-containing monooxygenase</fullName>
        <shortName evidence="1">FMO</shortName>
    </alternativeName>
    <alternativeName>
        <fullName evidence="1">SAFMO</fullName>
    </alternativeName>
</protein>
<gene>
    <name evidence="4" type="ordered locus">SAV2584</name>
</gene>
<dbReference type="EC" id="1.-.-.-" evidence="2"/>
<dbReference type="EMBL" id="BA000017">
    <property type="protein sequence ID" value="BAB58746.1"/>
    <property type="molecule type" value="Genomic_DNA"/>
</dbReference>
<dbReference type="PIR" id="A99964">
    <property type="entry name" value="A99964"/>
</dbReference>
<dbReference type="RefSeq" id="WP_001163746.1">
    <property type="nucleotide sequence ID" value="NC_002758.2"/>
</dbReference>
<dbReference type="PDB" id="3D1C">
    <property type="method" value="X-ray"/>
    <property type="resolution" value="2.40 A"/>
    <property type="chains" value="A=1-368"/>
</dbReference>
<dbReference type="PDBsum" id="3D1C"/>
<dbReference type="SMR" id="Q99R54"/>
<dbReference type="DNASU" id="1122609"/>
<dbReference type="KEGG" id="sav:SAV2584"/>
<dbReference type="HOGENOM" id="CLU_037483_0_0_9"/>
<dbReference type="Proteomes" id="UP000002481">
    <property type="component" value="Chromosome"/>
</dbReference>
<dbReference type="GO" id="GO:0050660">
    <property type="term" value="F:flavin adenine dinucleotide binding"/>
    <property type="evidence" value="ECO:0007669"/>
    <property type="project" value="TreeGrafter"/>
</dbReference>
<dbReference type="GO" id="GO:0004497">
    <property type="term" value="F:monooxygenase activity"/>
    <property type="evidence" value="ECO:0007669"/>
    <property type="project" value="UniProtKB-KW"/>
</dbReference>
<dbReference type="Gene3D" id="3.50.50.60">
    <property type="entry name" value="FAD/NAD(P)-binding domain"/>
    <property type="match status" value="2"/>
</dbReference>
<dbReference type="InterPro" id="IPR050982">
    <property type="entry name" value="Auxin_biosynth/cation_transpt"/>
</dbReference>
<dbReference type="InterPro" id="IPR036188">
    <property type="entry name" value="FAD/NAD-bd_sf"/>
</dbReference>
<dbReference type="PANTHER" id="PTHR43539">
    <property type="entry name" value="FLAVIN-BINDING MONOOXYGENASE-LIKE PROTEIN (AFU_ORTHOLOGUE AFUA_4G09220)"/>
    <property type="match status" value="1"/>
</dbReference>
<dbReference type="PANTHER" id="PTHR43539:SF89">
    <property type="entry name" value="NAD(P)-BINDING DOMAIN-CONTAINING PROTEIN"/>
    <property type="match status" value="1"/>
</dbReference>
<dbReference type="Pfam" id="PF13738">
    <property type="entry name" value="Pyr_redox_3"/>
    <property type="match status" value="1"/>
</dbReference>
<dbReference type="PRINTS" id="PR00368">
    <property type="entry name" value="FADPNR"/>
</dbReference>
<dbReference type="PRINTS" id="PR00411">
    <property type="entry name" value="PNDRDTASEI"/>
</dbReference>
<dbReference type="SUPFAM" id="SSF51905">
    <property type="entry name" value="FAD/NAD(P)-binding domain"/>
    <property type="match status" value="2"/>
</dbReference>
<reference key="1">
    <citation type="journal article" date="2001" name="Lancet">
        <title>Whole genome sequencing of meticillin-resistant Staphylococcus aureus.</title>
        <authorList>
            <person name="Kuroda M."/>
            <person name="Ohta T."/>
            <person name="Uchiyama I."/>
            <person name="Baba T."/>
            <person name="Yuzawa H."/>
            <person name="Kobayashi I."/>
            <person name="Cui L."/>
            <person name="Oguchi A."/>
            <person name="Aoki K."/>
            <person name="Nagai Y."/>
            <person name="Lian J.-Q."/>
            <person name="Ito T."/>
            <person name="Kanamori M."/>
            <person name="Matsumaru H."/>
            <person name="Maruyama A."/>
            <person name="Murakami H."/>
            <person name="Hosoyama A."/>
            <person name="Mizutani-Ui Y."/>
            <person name="Takahashi N.K."/>
            <person name="Sawano T."/>
            <person name="Inoue R."/>
            <person name="Kaito C."/>
            <person name="Sekimizu K."/>
            <person name="Hirakawa H."/>
            <person name="Kuhara S."/>
            <person name="Goto S."/>
            <person name="Yabuzaki J."/>
            <person name="Kanehisa M."/>
            <person name="Yamashita A."/>
            <person name="Oshima K."/>
            <person name="Furuya K."/>
            <person name="Yoshino C."/>
            <person name="Shiba T."/>
            <person name="Hattori M."/>
            <person name="Ogasawara N."/>
            <person name="Hayashi H."/>
            <person name="Hiramatsu K."/>
        </authorList>
    </citation>
    <scope>NUCLEOTIDE SEQUENCE [LARGE SCALE GENOMIC DNA]</scope>
    <source>
        <strain>Mu50 / ATCC 700699</strain>
    </source>
</reference>
<reference key="2">
    <citation type="journal article" date="2018" name="Proteins">
        <title>Crystal structure of a Baeyer-Villiger flavin-containing monooxygenase from Staphylococcus aureus MRSA strain Mu50.</title>
        <authorList>
            <person name="Hwang W.C."/>
            <person name="Xu Q."/>
            <person name="Wu B."/>
            <person name="Godzik A."/>
        </authorList>
    </citation>
    <scope>X-RAY CRYSTALLOGRAPHY (2.40 ANGSTROMS) IN COMPLEX WITH FAD</scope>
    <scope>COFACTOR</scope>
    <scope>RETRACTED PAPER</scope>
    <source>
        <strain>Mu50 / ATCC 700699</strain>
    </source>
</reference>
<reference key="3">
    <citation type="journal article" date="2018" name="Proteins">
        <authorList>
            <person name="Hwang W.C."/>
            <person name="Xu Q."/>
            <person name="Wu B."/>
            <person name="Godzik A."/>
        </authorList>
    </citation>
    <scope>RETRACTION NOTICE OF PUBMED:30338968</scope>
</reference>
<keyword id="KW-0002">3D-structure</keyword>
<keyword id="KW-0274">FAD</keyword>
<keyword id="KW-0285">Flavoprotein</keyword>
<keyword id="KW-0503">Monooxygenase</keyword>
<keyword id="KW-0521">NADP</keyword>
<keyword id="KW-0560">Oxidoreductase</keyword>
<feature type="chain" id="PRO_0000431622" description="Putative flavoprotein monooxygenase">
    <location>
        <begin position="1"/>
        <end position="368"/>
    </location>
</feature>
<feature type="binding site" evidence="5">
    <location>
        <position position="14"/>
    </location>
    <ligand>
        <name>FAD</name>
        <dbReference type="ChEBI" id="CHEBI:57692"/>
    </ligand>
</feature>
<feature type="binding site" evidence="5">
    <location>
        <position position="34"/>
    </location>
    <ligand>
        <name>FAD</name>
        <dbReference type="ChEBI" id="CHEBI:57692"/>
    </ligand>
</feature>
<feature type="binding site" evidence="5">
    <location>
        <position position="41"/>
    </location>
    <ligand>
        <name>FAD</name>
        <dbReference type="ChEBI" id="CHEBI:57692"/>
    </ligand>
</feature>
<feature type="binding site" evidence="5">
    <location>
        <begin position="52"/>
        <end position="53"/>
    </location>
    <ligand>
        <name>FAD</name>
        <dbReference type="ChEBI" id="CHEBI:57692"/>
    </ligand>
</feature>
<feature type="binding site" evidence="5">
    <location>
        <position position="110"/>
    </location>
    <ligand>
        <name>FAD</name>
        <dbReference type="ChEBI" id="CHEBI:57692"/>
    </ligand>
</feature>
<feature type="binding site" evidence="5">
    <location>
        <position position="307"/>
    </location>
    <ligand>
        <name>FAD</name>
        <dbReference type="ChEBI" id="CHEBI:57692"/>
    </ligand>
</feature>
<feature type="binding site" evidence="5">
    <location>
        <position position="319"/>
    </location>
    <ligand>
        <name>FAD</name>
        <dbReference type="ChEBI" id="CHEBI:57692"/>
    </ligand>
</feature>